<name>GVPM_HALMT</name>
<keyword id="KW-0304">Gas vesicle</keyword>
<sequence>MEPTKDETHAIVEFVDVLLRDGAVIQADVIVTVADIPLLGISLRAAIAGMTTMTAYGMFENWDATHRQRSMTGGRTIPVPNEKNGK</sequence>
<feature type="chain" id="PRO_0000200005" description="Gas vesicle protein M">
    <location>
        <begin position="1"/>
        <end position="86"/>
    </location>
</feature>
<proteinExistence type="evidence at transcript level"/>
<accession>Q02238</accession>
<accession>I3R5A2</accession>
<protein>
    <recommendedName>
        <fullName>Gas vesicle protein M</fullName>
        <shortName>GvpM</shortName>
    </recommendedName>
</protein>
<reference key="1">
    <citation type="journal article" date="1992" name="J. Mol. Biol.">
        <title>Three different but related gene clusters encoding gas vesicles in halophilic archaea.</title>
        <authorList>
            <person name="Englert C."/>
            <person name="Krueger K."/>
            <person name="Offner S."/>
            <person name="Pfeifer F."/>
        </authorList>
    </citation>
    <scope>NUCLEOTIDE SEQUENCE [GENOMIC DNA]</scope>
    <scope>INDUCTION</scope>
    <scope>GAS VESICLE GENE CLUSTER</scope>
    <source>
        <strain>ATCC 33500 / DSM 1411 / JCM 8866 / NBRC 14739 / NCIMB 2177 / R-4</strain>
    </source>
</reference>
<reference key="2">
    <citation type="journal article" date="2012" name="J. Bacteriol.">
        <title>Complete genome sequence of the metabolically versatile halophilic archaeon Haloferax mediterranei, a poly(3-hydroxybutyrate-co-3-hydroxyvalerate) producer.</title>
        <authorList>
            <person name="Han J."/>
            <person name="Zhang F."/>
            <person name="Hou J."/>
            <person name="Liu X."/>
            <person name="Li M."/>
            <person name="Liu H."/>
            <person name="Cai L."/>
            <person name="Zhang B."/>
            <person name="Chen Y."/>
            <person name="Zhou J."/>
            <person name="Hu S."/>
            <person name="Xiang H."/>
        </authorList>
    </citation>
    <scope>NUCLEOTIDE SEQUENCE [LARGE SCALE GENOMIC DNA]</scope>
    <source>
        <strain>ATCC 33500 / DSM 1411 / JCM 8866 / NBRC 14739 / NCIMB 2177 / R-4</strain>
    </source>
</reference>
<reference key="3">
    <citation type="journal article" date="1992" name="Mol. Microbiol.">
        <title>Functional analysis of the gas vesicle gene cluster of the halophilic archaeon Haloferax mediterranei defines the vac-region boundary and suggests a regulatory role for the gvpD gene or its product.</title>
        <authorList>
            <person name="Englert C."/>
            <person name="Wanner G."/>
            <person name="Pfeifer F."/>
        </authorList>
    </citation>
    <scope>FUNCTION</scope>
    <scope>DISRUPTION PHENOTYPE</scope>
</reference>
<reference key="4">
    <citation type="journal article" date="1996" name="Microbiology">
        <title>Influence of salt on the transcription of the gas-vesicle genes of Haloferax mediterranei and identification of the endogenous transcriptional activator gene.</title>
        <authorList>
            <person name="Roeder R."/>
            <person name="Pfeifer F."/>
        </authorList>
    </citation>
    <scope>INDUCTION BY SALT</scope>
    <source>
        <strain>ATCC 33500 / DSM 1411 / JCM 8866 / NBRC 14739 / NCIMB 2177 / R-4</strain>
    </source>
</reference>
<organism>
    <name type="scientific">Haloferax mediterranei (strain ATCC 33500 / DSM 1411 / JCM 8866 / NBRC 14739 / NCIMB 2177 / R-4)</name>
    <name type="common">Halobacterium mediterranei</name>
    <dbReference type="NCBI Taxonomy" id="523841"/>
    <lineage>
        <taxon>Archaea</taxon>
        <taxon>Methanobacteriati</taxon>
        <taxon>Methanobacteriota</taxon>
        <taxon>Stenosarchaea group</taxon>
        <taxon>Halobacteria</taxon>
        <taxon>Halobacteriales</taxon>
        <taxon>Haloferacaceae</taxon>
        <taxon>Haloferax</taxon>
    </lineage>
</organism>
<gene>
    <name evidence="5" type="primary">gvpM</name>
    <name type="ordered locus">HFX_1706</name>
</gene>
<evidence type="ECO:0000250" key="1">
    <source>
        <dbReference type="UniProtKB" id="P24377"/>
    </source>
</evidence>
<evidence type="ECO:0000269" key="2">
    <source>
    </source>
</evidence>
<evidence type="ECO:0000269" key="3">
    <source>
    </source>
</evidence>
<evidence type="ECO:0000269" key="4">
    <source>
    </source>
</evidence>
<evidence type="ECO:0000303" key="5">
    <source>
    </source>
</evidence>
<evidence type="ECO:0000305" key="6"/>
<comment type="function">
    <text evidence="1">Proteins GvpF to GvpM might be involved in nucleating gas vesicle formation. A minor component of the gas vesicle (By similarity). Gas vesicles are small, hollow, gas filled protein structures found in some microorganisms. They allow positioning of halobacteria at the optimal depth for growth in the poorly aerated, shallow brine pools of their habitat (By similarity).</text>
</comment>
<comment type="function">
    <text evidence="2 3 4">Expression of a 9.5 kb mc-vac DNA fragment containing 2 divergently transcribed regions (gvpD-gvpE-gvpF-gvpG-gvpH-gvpI-gvpJ-gvpK-gvpL-gvpM and gvpA-gvpC-gvpN-gvpO) allows H.volcanii to produce gas vesicles.</text>
</comment>
<comment type="subunit">
    <text evidence="1">GvpF to GvpM interact with each other in vitro, and may form multi-subunit complex(es). Might interact with GvpA.</text>
</comment>
<comment type="subcellular location">
    <subcellularLocation>
        <location evidence="1">Gas vesicle</location>
    </subcellularLocation>
</comment>
<comment type="induction">
    <text evidence="3 4">Transcribed from early-log phase, decreases as cells enter stationary phase, probably as a long gvpF-gvpM RNA (PubMed:1404376). Highly expressed in 25% salt, poorly expressed in 15% salt, no gas vesicles are formed at 15% salt (PubMed:8757736).</text>
</comment>
<comment type="disruption phenotype">
    <text evidence="2">No longer makes gas vesicles in H.volcanii; cells translate GvpA but do not make gas vesicles.</text>
</comment>
<comment type="miscellaneous">
    <text evidence="2 3">Encoded in a 14-gene locus called mc-vac.</text>
</comment>
<comment type="similarity">
    <text evidence="6">Belongs to the gas vesicle GvpA family.</text>
</comment>
<dbReference type="EMBL" id="X64701">
    <property type="protein sequence ID" value="CAA45955.1"/>
    <property type="molecule type" value="Genomic_DNA"/>
</dbReference>
<dbReference type="EMBL" id="CP001868">
    <property type="protein sequence ID" value="AFK19412.1"/>
    <property type="molecule type" value="Genomic_DNA"/>
</dbReference>
<dbReference type="PIR" id="S28126">
    <property type="entry name" value="S28126"/>
</dbReference>
<dbReference type="RefSeq" id="WP_004056696.1">
    <property type="nucleotide sequence ID" value="NC_017941.2"/>
</dbReference>
<dbReference type="STRING" id="523841.HFX_1706"/>
<dbReference type="PaxDb" id="523841-HFX_1706"/>
<dbReference type="GeneID" id="40157061"/>
<dbReference type="KEGG" id="hme:HFX_1706"/>
<dbReference type="eggNOG" id="arCOG03094">
    <property type="taxonomic scope" value="Archaea"/>
</dbReference>
<dbReference type="HOGENOM" id="CLU_161794_1_1_2"/>
<dbReference type="OrthoDB" id="131850at2157"/>
<dbReference type="Proteomes" id="UP000006469">
    <property type="component" value="Chromosome"/>
</dbReference>
<dbReference type="GO" id="GO:0031411">
    <property type="term" value="C:gas vesicle"/>
    <property type="evidence" value="ECO:0007669"/>
    <property type="project" value="UniProtKB-SubCell"/>
</dbReference>
<dbReference type="GO" id="GO:0012506">
    <property type="term" value="C:vesicle membrane"/>
    <property type="evidence" value="ECO:0007669"/>
    <property type="project" value="InterPro"/>
</dbReference>
<dbReference type="GO" id="GO:0005198">
    <property type="term" value="F:structural molecule activity"/>
    <property type="evidence" value="ECO:0007669"/>
    <property type="project" value="InterPro"/>
</dbReference>
<dbReference type="InterPro" id="IPR000638">
    <property type="entry name" value="Gas-vesicle_GvpA-like"/>
</dbReference>
<dbReference type="InterPro" id="IPR050530">
    <property type="entry name" value="GvpA"/>
</dbReference>
<dbReference type="InterPro" id="IPR018493">
    <property type="entry name" value="GvpA-like_CS"/>
</dbReference>
<dbReference type="NCBIfam" id="NF046091">
    <property type="entry name" value="halo_gas_GvpM"/>
    <property type="match status" value="1"/>
</dbReference>
<dbReference type="PANTHER" id="PTHR35344:SF4">
    <property type="entry name" value="GAS VESICLE PROTEIN A1"/>
    <property type="match status" value="1"/>
</dbReference>
<dbReference type="PANTHER" id="PTHR35344">
    <property type="entry name" value="GAS VESICLE STRUCTURAL PROTEIN 2-RELATED"/>
    <property type="match status" value="1"/>
</dbReference>
<dbReference type="Pfam" id="PF00741">
    <property type="entry name" value="Gas_vesicle"/>
    <property type="match status" value="1"/>
</dbReference>
<dbReference type="PROSITE" id="PS00234">
    <property type="entry name" value="GAS_VESICLE_A_1"/>
    <property type="match status" value="1"/>
</dbReference>
<dbReference type="PROSITE" id="PS00669">
    <property type="entry name" value="GAS_VESICLE_A_2"/>
    <property type="match status" value="1"/>
</dbReference>